<comment type="function">
    <text evidence="1">One of the primary rRNA binding proteins, it binds specifically to the 5'-end of 16S ribosomal RNA.</text>
</comment>
<comment type="subunit">
    <text evidence="1">Part of the 30S ribosomal subunit.</text>
</comment>
<comment type="similarity">
    <text evidence="1">Belongs to the universal ribosomal protein uS17 family.</text>
</comment>
<dbReference type="EMBL" id="CU234118">
    <property type="protein sequence ID" value="CAL76877.1"/>
    <property type="molecule type" value="Genomic_DNA"/>
</dbReference>
<dbReference type="RefSeq" id="WP_006611847.1">
    <property type="nucleotide sequence ID" value="NC_009445.1"/>
</dbReference>
<dbReference type="SMR" id="A4YSK1"/>
<dbReference type="STRING" id="114615.BRADO3075"/>
<dbReference type="KEGG" id="bra:BRADO3075"/>
<dbReference type="eggNOG" id="COG0186">
    <property type="taxonomic scope" value="Bacteria"/>
</dbReference>
<dbReference type="HOGENOM" id="CLU_073626_1_1_5"/>
<dbReference type="OrthoDB" id="9811714at2"/>
<dbReference type="Proteomes" id="UP000001994">
    <property type="component" value="Chromosome"/>
</dbReference>
<dbReference type="GO" id="GO:0022627">
    <property type="term" value="C:cytosolic small ribosomal subunit"/>
    <property type="evidence" value="ECO:0007669"/>
    <property type="project" value="TreeGrafter"/>
</dbReference>
<dbReference type="GO" id="GO:0019843">
    <property type="term" value="F:rRNA binding"/>
    <property type="evidence" value="ECO:0007669"/>
    <property type="project" value="UniProtKB-UniRule"/>
</dbReference>
<dbReference type="GO" id="GO:0003735">
    <property type="term" value="F:structural constituent of ribosome"/>
    <property type="evidence" value="ECO:0007669"/>
    <property type="project" value="InterPro"/>
</dbReference>
<dbReference type="GO" id="GO:0006412">
    <property type="term" value="P:translation"/>
    <property type="evidence" value="ECO:0007669"/>
    <property type="project" value="UniProtKB-UniRule"/>
</dbReference>
<dbReference type="CDD" id="cd00364">
    <property type="entry name" value="Ribosomal_uS17"/>
    <property type="match status" value="1"/>
</dbReference>
<dbReference type="FunFam" id="2.40.50.140:FF:000204">
    <property type="entry name" value="30S ribosomal protein S17"/>
    <property type="match status" value="1"/>
</dbReference>
<dbReference type="Gene3D" id="2.40.50.140">
    <property type="entry name" value="Nucleic acid-binding proteins"/>
    <property type="match status" value="1"/>
</dbReference>
<dbReference type="HAMAP" id="MF_01345_B">
    <property type="entry name" value="Ribosomal_uS17_B"/>
    <property type="match status" value="1"/>
</dbReference>
<dbReference type="InterPro" id="IPR012340">
    <property type="entry name" value="NA-bd_OB-fold"/>
</dbReference>
<dbReference type="InterPro" id="IPR000266">
    <property type="entry name" value="Ribosomal_uS17"/>
</dbReference>
<dbReference type="InterPro" id="IPR019984">
    <property type="entry name" value="Ribosomal_uS17_bact/chlr"/>
</dbReference>
<dbReference type="InterPro" id="IPR019979">
    <property type="entry name" value="Ribosomal_uS17_CS"/>
</dbReference>
<dbReference type="NCBIfam" id="NF004123">
    <property type="entry name" value="PRK05610.1"/>
    <property type="match status" value="1"/>
</dbReference>
<dbReference type="NCBIfam" id="TIGR03635">
    <property type="entry name" value="uS17_bact"/>
    <property type="match status" value="1"/>
</dbReference>
<dbReference type="PANTHER" id="PTHR10744">
    <property type="entry name" value="40S RIBOSOMAL PROTEIN S11 FAMILY MEMBER"/>
    <property type="match status" value="1"/>
</dbReference>
<dbReference type="PANTHER" id="PTHR10744:SF1">
    <property type="entry name" value="SMALL RIBOSOMAL SUBUNIT PROTEIN US17M"/>
    <property type="match status" value="1"/>
</dbReference>
<dbReference type="Pfam" id="PF00366">
    <property type="entry name" value="Ribosomal_S17"/>
    <property type="match status" value="1"/>
</dbReference>
<dbReference type="PRINTS" id="PR00973">
    <property type="entry name" value="RIBOSOMALS17"/>
</dbReference>
<dbReference type="SUPFAM" id="SSF50249">
    <property type="entry name" value="Nucleic acid-binding proteins"/>
    <property type="match status" value="1"/>
</dbReference>
<dbReference type="PROSITE" id="PS00056">
    <property type="entry name" value="RIBOSOMAL_S17"/>
    <property type="match status" value="1"/>
</dbReference>
<proteinExistence type="inferred from homology"/>
<accession>A4YSK1</accession>
<feature type="chain" id="PRO_1000054920" description="Small ribosomal subunit protein uS17">
    <location>
        <begin position="1"/>
        <end position="82"/>
    </location>
</feature>
<evidence type="ECO:0000255" key="1">
    <source>
        <dbReference type="HAMAP-Rule" id="MF_01345"/>
    </source>
</evidence>
<evidence type="ECO:0000305" key="2"/>
<protein>
    <recommendedName>
        <fullName evidence="1">Small ribosomal subunit protein uS17</fullName>
    </recommendedName>
    <alternativeName>
        <fullName evidence="2">30S ribosomal protein S17</fullName>
    </alternativeName>
</protein>
<gene>
    <name evidence="1" type="primary">rpsQ</name>
    <name type="ordered locus">BRADO3075</name>
</gene>
<name>RS17_BRASO</name>
<sequence length="82" mass="9685">MPKRTLQGVVVSDKQAKTVVVRVDRRFTHPIYKKTIRRSKNYHAHDESNEFKPGDMVWIEESKPISKLKRWTVVRGEHKKTA</sequence>
<reference key="1">
    <citation type="journal article" date="2007" name="Science">
        <title>Legumes symbioses: absence of nod genes in photosynthetic bradyrhizobia.</title>
        <authorList>
            <person name="Giraud E."/>
            <person name="Moulin L."/>
            <person name="Vallenet D."/>
            <person name="Barbe V."/>
            <person name="Cytryn E."/>
            <person name="Avarre J.-C."/>
            <person name="Jaubert M."/>
            <person name="Simon D."/>
            <person name="Cartieaux F."/>
            <person name="Prin Y."/>
            <person name="Bena G."/>
            <person name="Hannibal L."/>
            <person name="Fardoux J."/>
            <person name="Kojadinovic M."/>
            <person name="Vuillet L."/>
            <person name="Lajus A."/>
            <person name="Cruveiller S."/>
            <person name="Rouy Z."/>
            <person name="Mangenot S."/>
            <person name="Segurens B."/>
            <person name="Dossat C."/>
            <person name="Franck W.L."/>
            <person name="Chang W.-S."/>
            <person name="Saunders E."/>
            <person name="Bruce D."/>
            <person name="Richardson P."/>
            <person name="Normand P."/>
            <person name="Dreyfus B."/>
            <person name="Pignol D."/>
            <person name="Stacey G."/>
            <person name="Emerich D."/>
            <person name="Vermeglio A."/>
            <person name="Medigue C."/>
            <person name="Sadowsky M."/>
        </authorList>
    </citation>
    <scope>NUCLEOTIDE SEQUENCE [LARGE SCALE GENOMIC DNA]</scope>
    <source>
        <strain>ORS 278</strain>
    </source>
</reference>
<organism>
    <name type="scientific">Bradyrhizobium sp. (strain ORS 278)</name>
    <dbReference type="NCBI Taxonomy" id="114615"/>
    <lineage>
        <taxon>Bacteria</taxon>
        <taxon>Pseudomonadati</taxon>
        <taxon>Pseudomonadota</taxon>
        <taxon>Alphaproteobacteria</taxon>
        <taxon>Hyphomicrobiales</taxon>
        <taxon>Nitrobacteraceae</taxon>
        <taxon>Bradyrhizobium</taxon>
    </lineage>
</organism>
<keyword id="KW-1185">Reference proteome</keyword>
<keyword id="KW-0687">Ribonucleoprotein</keyword>
<keyword id="KW-0689">Ribosomal protein</keyword>
<keyword id="KW-0694">RNA-binding</keyword>
<keyword id="KW-0699">rRNA-binding</keyword>